<keyword id="KW-0143">Chaperone</keyword>
<keyword id="KW-0903">Direct protein sequencing</keyword>
<keyword id="KW-0472">Membrane</keyword>
<keyword id="KW-1185">Reference proteome</keyword>
<keyword id="KW-0735">Signal-anchor</keyword>
<keyword id="KW-0812">Transmembrane</keyword>
<keyword id="KW-1133">Transmembrane helix</keyword>
<organism>
    <name type="scientific">Rattus norvegicus</name>
    <name type="common">Rat</name>
    <dbReference type="NCBI Taxonomy" id="10116"/>
    <lineage>
        <taxon>Eukaryota</taxon>
        <taxon>Metazoa</taxon>
        <taxon>Chordata</taxon>
        <taxon>Craniata</taxon>
        <taxon>Vertebrata</taxon>
        <taxon>Euteleostomi</taxon>
        <taxon>Mammalia</taxon>
        <taxon>Eutheria</taxon>
        <taxon>Euarchontoglires</taxon>
        <taxon>Glires</taxon>
        <taxon>Rodentia</taxon>
        <taxon>Myomorpha</taxon>
        <taxon>Muroidea</taxon>
        <taxon>Muridae</taxon>
        <taxon>Murinae</taxon>
        <taxon>Rattus</taxon>
    </lineage>
</organism>
<evidence type="ECO:0000250" key="1"/>
<evidence type="ECO:0000255" key="2"/>
<evidence type="ECO:0000305" key="3"/>
<reference key="1">
    <citation type="journal article" date="2004" name="Genome Res.">
        <title>The status, quality, and expansion of the NIH full-length cDNA project: the Mammalian Gene Collection (MGC).</title>
        <authorList>
            <consortium name="The MGC Project Team"/>
        </authorList>
    </citation>
    <scope>NUCLEOTIDE SEQUENCE [LARGE SCALE MRNA]</scope>
    <source>
        <tissue>Prostate</tissue>
    </source>
</reference>
<reference key="2">
    <citation type="journal article" date="2002" name="Proc. Natl. Acad. Sci. U.S.A.">
        <title>A unique molecular chaperone Cosmc required for activity of the mammalian core 1 beta 3-galactosyltransferase.</title>
        <authorList>
            <person name="Ju T."/>
            <person name="Cummings R.D."/>
        </authorList>
    </citation>
    <scope>PROTEIN SEQUENCE OF 1-18</scope>
    <scope>INTERACTION WITH C1GALT1</scope>
</reference>
<sequence length="316" mass="36035">MLSESSSFLKGVMLGSIFCALITMLGHIRIGNRMHHHEHHHLQAPNKDDILKISETERMELSKSFQVYCIVLVKPKDVSLWAAVKETWTKHCDKAEFFSSENVKVFESINMDTNDMWLMMRKAYKYAYDKYKDQYNWFFLARPTTFAVIENLKYFLLRKDPSQPFYLGHTVKSGDLEYVSVDGGIVLSIESMKRLNGLLSVPEKCPEQGGMIWKISEDKQLAVCLKYAGVFAENAEDADGKDVFNTKSVGLFIKEAMTNQPNQVVEGCCSDMAVTFNGLTPNQMHVMMYGVYRLRAFGHVFNDALVFLPPNGSEND</sequence>
<dbReference type="EMBL" id="BC099818">
    <property type="protein sequence ID" value="AAH99818.1"/>
    <property type="molecule type" value="mRNA"/>
</dbReference>
<dbReference type="RefSeq" id="NP_001025204.1">
    <property type="nucleotide sequence ID" value="NM_001030033.1"/>
</dbReference>
<dbReference type="RefSeq" id="XP_006257549.1">
    <property type="nucleotide sequence ID" value="XM_006257487.3"/>
</dbReference>
<dbReference type="SMR" id="Q499P3"/>
<dbReference type="FunCoup" id="Q499P3">
    <property type="interactions" value="220"/>
</dbReference>
<dbReference type="STRING" id="10116.ENSRNOP00000003449"/>
<dbReference type="CAZy" id="GT31">
    <property type="family name" value="Glycosyltransferase Family 31"/>
</dbReference>
<dbReference type="PhosphoSitePlus" id="Q499P3"/>
<dbReference type="PaxDb" id="10116-ENSRNOP00000003449"/>
<dbReference type="Ensembl" id="ENSRNOT00000105484.1">
    <property type="protein sequence ID" value="ENSRNOP00000081816.1"/>
    <property type="gene ID" value="ENSRNOG00000069353.1"/>
</dbReference>
<dbReference type="GeneID" id="302499"/>
<dbReference type="KEGG" id="rno:302499"/>
<dbReference type="UCSC" id="RGD:1311230">
    <property type="organism name" value="rat"/>
</dbReference>
<dbReference type="AGR" id="RGD:1311230"/>
<dbReference type="CTD" id="29071"/>
<dbReference type="RGD" id="1311230">
    <property type="gene designation" value="C1galt1c1"/>
</dbReference>
<dbReference type="eggNOG" id="KOG2246">
    <property type="taxonomic scope" value="Eukaryota"/>
</dbReference>
<dbReference type="GeneTree" id="ENSGT00940000155145"/>
<dbReference type="HOGENOM" id="CLU_874237_0_0_1"/>
<dbReference type="InParanoid" id="Q499P3"/>
<dbReference type="OMA" id="WVMMRKA"/>
<dbReference type="OrthoDB" id="414175at2759"/>
<dbReference type="PhylomeDB" id="Q499P3"/>
<dbReference type="TreeFam" id="TF317293"/>
<dbReference type="Reactome" id="R-RNO-913709">
    <property type="pathway name" value="O-linked glycosylation of mucins"/>
</dbReference>
<dbReference type="PRO" id="PR:Q499P3"/>
<dbReference type="Proteomes" id="UP000002494">
    <property type="component" value="Chromosome X"/>
</dbReference>
<dbReference type="Bgee" id="ENSRNOG00000002536">
    <property type="expression patterns" value="Expressed in stomach and 20 other cell types or tissues"/>
</dbReference>
<dbReference type="GO" id="GO:0016020">
    <property type="term" value="C:membrane"/>
    <property type="evidence" value="ECO:0007669"/>
    <property type="project" value="UniProtKB-SubCell"/>
</dbReference>
<dbReference type="GO" id="GO:0016263">
    <property type="term" value="F:glycoprotein-N-acetylgalactosamine 3-beta-galactosyltransferase activity"/>
    <property type="evidence" value="ECO:0000318"/>
    <property type="project" value="GO_Central"/>
</dbReference>
<dbReference type="GO" id="GO:0030168">
    <property type="term" value="P:platelet activation"/>
    <property type="evidence" value="ECO:0000266"/>
    <property type="project" value="RGD"/>
</dbReference>
<dbReference type="GO" id="GO:0036344">
    <property type="term" value="P:platelet morphogenesis"/>
    <property type="evidence" value="ECO:0000266"/>
    <property type="project" value="RGD"/>
</dbReference>
<dbReference type="GO" id="GO:0006493">
    <property type="term" value="P:protein O-linked glycosylation"/>
    <property type="evidence" value="ECO:0000250"/>
    <property type="project" value="UniProtKB"/>
</dbReference>
<dbReference type="FunFam" id="3.90.550.50:FF:000016">
    <property type="entry name" value="C1GALT1-specific chaperone 1"/>
    <property type="match status" value="1"/>
</dbReference>
<dbReference type="Gene3D" id="3.90.550.50">
    <property type="match status" value="1"/>
</dbReference>
<dbReference type="InterPro" id="IPR026050">
    <property type="entry name" value="C1GALT1/C1GALT1_chp1"/>
</dbReference>
<dbReference type="PANTHER" id="PTHR23033">
    <property type="entry name" value="BETA1,3-GALACTOSYLTRANSFERASE"/>
    <property type="match status" value="1"/>
</dbReference>
<dbReference type="PANTHER" id="PTHR23033:SF2">
    <property type="entry name" value="C1GALT1-SPECIFIC CHAPERONE 1"/>
    <property type="match status" value="1"/>
</dbReference>
<protein>
    <recommendedName>
        <fullName>C1GALT1-specific chaperone 1</fullName>
    </recommendedName>
</protein>
<gene>
    <name type="primary">C1galt1c1</name>
</gene>
<comment type="function">
    <text evidence="1">Probable chaperone required for the generation of 1 O-glycan Gal-beta1-3GalNAc-alpha1-Ser/Thr (T antigen), which is a precursor for many extended O-glycans in glycoproteins. Probably acts as a specific molecular chaperone assisting the folding/stability of core 1 beta-3-galactosyltransferase (C1GALT1) (By similarity).</text>
</comment>
<comment type="subunit">
    <text>Associates with core 1 beta-3-galactosyltransferase (C1GALT1), probably not with the soluble active form.</text>
</comment>
<comment type="subcellular location">
    <subcellularLocation>
        <location evidence="3">Membrane</location>
        <topology evidence="3">Single-pass type II membrane protein</topology>
    </subcellularLocation>
</comment>
<comment type="similarity">
    <text evidence="3">Belongs to the glycosyltransferase 31 family. Beta3-Gal-T subfamily.</text>
</comment>
<name>C1GLC_RAT</name>
<accession>Q499P3</accession>
<feature type="chain" id="PRO_0000285076" description="C1GALT1-specific chaperone 1">
    <location>
        <begin position="1"/>
        <end position="316"/>
    </location>
</feature>
<feature type="topological domain" description="Cytoplasmic" evidence="2">
    <location>
        <begin position="1"/>
        <end position="6"/>
    </location>
</feature>
<feature type="transmembrane region" description="Helical; Signal-anchor for type II membrane protein" evidence="2">
    <location>
        <begin position="7"/>
        <end position="26"/>
    </location>
</feature>
<feature type="topological domain" description="Lumenal" evidence="2">
    <location>
        <begin position="27"/>
        <end position="316"/>
    </location>
</feature>
<proteinExistence type="evidence at protein level"/>